<feature type="chain" id="PRO_0000277919" description="D-alanine--D-alanine ligase">
    <location>
        <begin position="1"/>
        <end position="321"/>
    </location>
</feature>
<feature type="domain" description="ATP-grasp" evidence="2">
    <location>
        <begin position="121"/>
        <end position="315"/>
    </location>
</feature>
<feature type="binding site" evidence="2">
    <location>
        <begin position="148"/>
        <end position="199"/>
    </location>
    <ligand>
        <name>ATP</name>
        <dbReference type="ChEBI" id="CHEBI:30616"/>
    </ligand>
</feature>
<feature type="binding site" evidence="2">
    <location>
        <position position="268"/>
    </location>
    <ligand>
        <name>Mg(2+)</name>
        <dbReference type="ChEBI" id="CHEBI:18420"/>
        <label>1</label>
    </ligand>
</feature>
<feature type="binding site" evidence="2">
    <location>
        <position position="282"/>
    </location>
    <ligand>
        <name>Mg(2+)</name>
        <dbReference type="ChEBI" id="CHEBI:18420"/>
        <label>1</label>
    </ligand>
</feature>
<feature type="binding site" evidence="2">
    <location>
        <position position="282"/>
    </location>
    <ligand>
        <name>Mg(2+)</name>
        <dbReference type="ChEBI" id="CHEBI:18420"/>
        <label>2</label>
    </ligand>
</feature>
<feature type="binding site" evidence="2">
    <location>
        <position position="284"/>
    </location>
    <ligand>
        <name>Mg(2+)</name>
        <dbReference type="ChEBI" id="CHEBI:18420"/>
        <label>2</label>
    </ligand>
</feature>
<organism>
    <name type="scientific">Rickettsia typhi (strain ATCC VR-144 / Wilmington)</name>
    <dbReference type="NCBI Taxonomy" id="257363"/>
    <lineage>
        <taxon>Bacteria</taxon>
        <taxon>Pseudomonadati</taxon>
        <taxon>Pseudomonadota</taxon>
        <taxon>Alphaproteobacteria</taxon>
        <taxon>Rickettsiales</taxon>
        <taxon>Rickettsiaceae</taxon>
        <taxon>Rickettsieae</taxon>
        <taxon>Rickettsia</taxon>
        <taxon>typhus group</taxon>
    </lineage>
</organism>
<sequence length="321" mass="35822">MNKYQTHLLEHSVVKILSGTGKKHIALVAGGMSAEREVSLISSVGVSKALIELGYKVTFIDMGADIAVKLQEINPDIVFNCLHGTYGEDGCLPGLLNIMRIPYTHSGVLSSALAFDKIHSRSCFLKNNINMADSIVVSKSDHINTDPMKRPYVIKPLKQGSSIGVEVIFEEDDFHFIDYDFPYGEDIIIEQYIQGQELQVALLNGKALGVLEIKLLKNRFYDYETKYNKGFAKHVCPAQLPANLYKKLLIESEKIYKTINCKGPVRAEFILEEQTNKLYVLEINTHPGMTPLSIVPEIAAYAGISFTNLIEEIIKMASFES</sequence>
<protein>
    <recommendedName>
        <fullName evidence="2">D-alanine--D-alanine ligase</fullName>
        <ecNumber evidence="2">6.3.2.4</ecNumber>
    </recommendedName>
    <alternativeName>
        <fullName evidence="2">D-Ala-D-Ala ligase</fullName>
    </alternativeName>
    <alternativeName>
        <fullName evidence="2">D-alanylalanine synthetase</fullName>
    </alternativeName>
</protein>
<accession>Q68XC0</accession>
<evidence type="ECO:0000250" key="1"/>
<evidence type="ECO:0000255" key="2">
    <source>
        <dbReference type="HAMAP-Rule" id="MF_00047"/>
    </source>
</evidence>
<dbReference type="EC" id="6.3.2.4" evidence="2"/>
<dbReference type="EMBL" id="AE017197">
    <property type="protein sequence ID" value="AAU03722.1"/>
    <property type="molecule type" value="Genomic_DNA"/>
</dbReference>
<dbReference type="RefSeq" id="WP_011190707.1">
    <property type="nucleotide sequence ID" value="NC_006142.1"/>
</dbReference>
<dbReference type="SMR" id="Q68XC0"/>
<dbReference type="KEGG" id="rty:RT0241"/>
<dbReference type="eggNOG" id="COG1181">
    <property type="taxonomic scope" value="Bacteria"/>
</dbReference>
<dbReference type="HOGENOM" id="CLU_039268_1_1_5"/>
<dbReference type="OrthoDB" id="9813261at2"/>
<dbReference type="UniPathway" id="UPA00219"/>
<dbReference type="Proteomes" id="UP000000604">
    <property type="component" value="Chromosome"/>
</dbReference>
<dbReference type="GO" id="GO:0005737">
    <property type="term" value="C:cytoplasm"/>
    <property type="evidence" value="ECO:0007669"/>
    <property type="project" value="UniProtKB-SubCell"/>
</dbReference>
<dbReference type="GO" id="GO:0005524">
    <property type="term" value="F:ATP binding"/>
    <property type="evidence" value="ECO:0007669"/>
    <property type="project" value="UniProtKB-KW"/>
</dbReference>
<dbReference type="GO" id="GO:0008716">
    <property type="term" value="F:D-alanine-D-alanine ligase activity"/>
    <property type="evidence" value="ECO:0007669"/>
    <property type="project" value="UniProtKB-UniRule"/>
</dbReference>
<dbReference type="GO" id="GO:0046872">
    <property type="term" value="F:metal ion binding"/>
    <property type="evidence" value="ECO:0007669"/>
    <property type="project" value="UniProtKB-KW"/>
</dbReference>
<dbReference type="GO" id="GO:0071555">
    <property type="term" value="P:cell wall organization"/>
    <property type="evidence" value="ECO:0007669"/>
    <property type="project" value="UniProtKB-KW"/>
</dbReference>
<dbReference type="GO" id="GO:0009252">
    <property type="term" value="P:peptidoglycan biosynthetic process"/>
    <property type="evidence" value="ECO:0007669"/>
    <property type="project" value="UniProtKB-UniRule"/>
</dbReference>
<dbReference type="GO" id="GO:0008360">
    <property type="term" value="P:regulation of cell shape"/>
    <property type="evidence" value="ECO:0007669"/>
    <property type="project" value="UniProtKB-KW"/>
</dbReference>
<dbReference type="Gene3D" id="3.40.50.20">
    <property type="match status" value="1"/>
</dbReference>
<dbReference type="Gene3D" id="3.30.1490.20">
    <property type="entry name" value="ATP-grasp fold, A domain"/>
    <property type="match status" value="1"/>
</dbReference>
<dbReference type="Gene3D" id="3.30.470.20">
    <property type="entry name" value="ATP-grasp fold, B domain"/>
    <property type="match status" value="1"/>
</dbReference>
<dbReference type="HAMAP" id="MF_00047">
    <property type="entry name" value="Dala_Dala_lig"/>
    <property type="match status" value="1"/>
</dbReference>
<dbReference type="InterPro" id="IPR011761">
    <property type="entry name" value="ATP-grasp"/>
</dbReference>
<dbReference type="InterPro" id="IPR013815">
    <property type="entry name" value="ATP_grasp_subdomain_1"/>
</dbReference>
<dbReference type="InterPro" id="IPR000291">
    <property type="entry name" value="D-Ala_lig_Van_CS"/>
</dbReference>
<dbReference type="InterPro" id="IPR005905">
    <property type="entry name" value="D_ala_D_ala"/>
</dbReference>
<dbReference type="InterPro" id="IPR011095">
    <property type="entry name" value="Dala_Dala_lig_C"/>
</dbReference>
<dbReference type="InterPro" id="IPR011127">
    <property type="entry name" value="Dala_Dala_lig_N"/>
</dbReference>
<dbReference type="InterPro" id="IPR016185">
    <property type="entry name" value="PreATP-grasp_dom_sf"/>
</dbReference>
<dbReference type="NCBIfam" id="TIGR01205">
    <property type="entry name" value="D_ala_D_alaTIGR"/>
    <property type="match status" value="1"/>
</dbReference>
<dbReference type="NCBIfam" id="NF002378">
    <property type="entry name" value="PRK01372.1"/>
    <property type="match status" value="1"/>
</dbReference>
<dbReference type="PANTHER" id="PTHR23132">
    <property type="entry name" value="D-ALANINE--D-ALANINE LIGASE"/>
    <property type="match status" value="1"/>
</dbReference>
<dbReference type="PANTHER" id="PTHR23132:SF23">
    <property type="entry name" value="D-ALANINE--D-ALANINE LIGASE B"/>
    <property type="match status" value="1"/>
</dbReference>
<dbReference type="Pfam" id="PF07478">
    <property type="entry name" value="Dala_Dala_lig_C"/>
    <property type="match status" value="1"/>
</dbReference>
<dbReference type="Pfam" id="PF01820">
    <property type="entry name" value="Dala_Dala_lig_N"/>
    <property type="match status" value="1"/>
</dbReference>
<dbReference type="PIRSF" id="PIRSF039102">
    <property type="entry name" value="Ddl/VanB"/>
    <property type="match status" value="1"/>
</dbReference>
<dbReference type="SUPFAM" id="SSF56059">
    <property type="entry name" value="Glutathione synthetase ATP-binding domain-like"/>
    <property type="match status" value="1"/>
</dbReference>
<dbReference type="SUPFAM" id="SSF52440">
    <property type="entry name" value="PreATP-grasp domain"/>
    <property type="match status" value="1"/>
</dbReference>
<dbReference type="PROSITE" id="PS50975">
    <property type="entry name" value="ATP_GRASP"/>
    <property type="match status" value="1"/>
</dbReference>
<dbReference type="PROSITE" id="PS00843">
    <property type="entry name" value="DALA_DALA_LIGASE_1"/>
    <property type="match status" value="1"/>
</dbReference>
<dbReference type="PROSITE" id="PS00844">
    <property type="entry name" value="DALA_DALA_LIGASE_2"/>
    <property type="match status" value="1"/>
</dbReference>
<proteinExistence type="inferred from homology"/>
<keyword id="KW-0067">ATP-binding</keyword>
<keyword id="KW-0133">Cell shape</keyword>
<keyword id="KW-0961">Cell wall biogenesis/degradation</keyword>
<keyword id="KW-0963">Cytoplasm</keyword>
<keyword id="KW-0436">Ligase</keyword>
<keyword id="KW-0460">Magnesium</keyword>
<keyword id="KW-0464">Manganese</keyword>
<keyword id="KW-0479">Metal-binding</keyword>
<keyword id="KW-0547">Nucleotide-binding</keyword>
<keyword id="KW-0573">Peptidoglycan synthesis</keyword>
<reference key="1">
    <citation type="journal article" date="2004" name="J. Bacteriol.">
        <title>Complete genome sequence of Rickettsia typhi and comparison with sequences of other Rickettsiae.</title>
        <authorList>
            <person name="McLeod M.P."/>
            <person name="Qin X."/>
            <person name="Karpathy S.E."/>
            <person name="Gioia J."/>
            <person name="Highlander S.K."/>
            <person name="Fox G.E."/>
            <person name="McNeill T.Z."/>
            <person name="Jiang H."/>
            <person name="Muzny D."/>
            <person name="Jacob L.S."/>
            <person name="Hawes A.C."/>
            <person name="Sodergren E."/>
            <person name="Gill R."/>
            <person name="Hume J."/>
            <person name="Morgan M."/>
            <person name="Fan G."/>
            <person name="Amin A.G."/>
            <person name="Gibbs R.A."/>
            <person name="Hong C."/>
            <person name="Yu X.-J."/>
            <person name="Walker D.H."/>
            <person name="Weinstock G.M."/>
        </authorList>
    </citation>
    <scope>NUCLEOTIDE SEQUENCE [LARGE SCALE GENOMIC DNA]</scope>
    <source>
        <strain>ATCC VR-144 / Wilmington</strain>
    </source>
</reference>
<comment type="function">
    <text evidence="2">Cell wall formation.</text>
</comment>
<comment type="catalytic activity">
    <reaction evidence="2">
        <text>2 D-alanine + ATP = D-alanyl-D-alanine + ADP + phosphate + H(+)</text>
        <dbReference type="Rhea" id="RHEA:11224"/>
        <dbReference type="ChEBI" id="CHEBI:15378"/>
        <dbReference type="ChEBI" id="CHEBI:30616"/>
        <dbReference type="ChEBI" id="CHEBI:43474"/>
        <dbReference type="ChEBI" id="CHEBI:57416"/>
        <dbReference type="ChEBI" id="CHEBI:57822"/>
        <dbReference type="ChEBI" id="CHEBI:456216"/>
        <dbReference type="EC" id="6.3.2.4"/>
    </reaction>
</comment>
<comment type="cofactor">
    <cofactor evidence="1">
        <name>Mg(2+)</name>
        <dbReference type="ChEBI" id="CHEBI:18420"/>
    </cofactor>
    <cofactor evidence="1">
        <name>Mn(2+)</name>
        <dbReference type="ChEBI" id="CHEBI:29035"/>
    </cofactor>
    <text evidence="1">Binds 2 magnesium or manganese ions per subunit.</text>
</comment>
<comment type="pathway">
    <text evidence="2">Cell wall biogenesis; peptidoglycan biosynthesis.</text>
</comment>
<comment type="subcellular location">
    <subcellularLocation>
        <location evidence="2">Cytoplasm</location>
    </subcellularLocation>
</comment>
<comment type="similarity">
    <text evidence="2">Belongs to the D-alanine--D-alanine ligase family.</text>
</comment>
<name>DDL_RICTY</name>
<gene>
    <name evidence="2" type="primary">ddl</name>
    <name type="ordered locus">RT0241</name>
</gene>